<gene>
    <name evidence="1" type="primary">ihfB</name>
    <name evidence="1" type="synonym">himD</name>
    <name type="ordered locus">ECIAI39_2235</name>
</gene>
<feature type="chain" id="PRO_1000122211" description="Integration host factor subunit beta">
    <location>
        <begin position="1"/>
        <end position="94"/>
    </location>
</feature>
<proteinExistence type="inferred from homology"/>
<name>IHFB_ECO7I</name>
<protein>
    <recommendedName>
        <fullName evidence="1">Integration host factor subunit beta</fullName>
        <shortName evidence="1">IHF-beta</shortName>
    </recommendedName>
</protein>
<evidence type="ECO:0000255" key="1">
    <source>
        <dbReference type="HAMAP-Rule" id="MF_00381"/>
    </source>
</evidence>
<reference key="1">
    <citation type="journal article" date="2009" name="PLoS Genet.">
        <title>Organised genome dynamics in the Escherichia coli species results in highly diverse adaptive paths.</title>
        <authorList>
            <person name="Touchon M."/>
            <person name="Hoede C."/>
            <person name="Tenaillon O."/>
            <person name="Barbe V."/>
            <person name="Baeriswyl S."/>
            <person name="Bidet P."/>
            <person name="Bingen E."/>
            <person name="Bonacorsi S."/>
            <person name="Bouchier C."/>
            <person name="Bouvet O."/>
            <person name="Calteau A."/>
            <person name="Chiapello H."/>
            <person name="Clermont O."/>
            <person name="Cruveiller S."/>
            <person name="Danchin A."/>
            <person name="Diard M."/>
            <person name="Dossat C."/>
            <person name="Karoui M.E."/>
            <person name="Frapy E."/>
            <person name="Garry L."/>
            <person name="Ghigo J.M."/>
            <person name="Gilles A.M."/>
            <person name="Johnson J."/>
            <person name="Le Bouguenec C."/>
            <person name="Lescat M."/>
            <person name="Mangenot S."/>
            <person name="Martinez-Jehanne V."/>
            <person name="Matic I."/>
            <person name="Nassif X."/>
            <person name="Oztas S."/>
            <person name="Petit M.A."/>
            <person name="Pichon C."/>
            <person name="Rouy Z."/>
            <person name="Ruf C.S."/>
            <person name="Schneider D."/>
            <person name="Tourret J."/>
            <person name="Vacherie B."/>
            <person name="Vallenet D."/>
            <person name="Medigue C."/>
            <person name="Rocha E.P.C."/>
            <person name="Denamur E."/>
        </authorList>
    </citation>
    <scope>NUCLEOTIDE SEQUENCE [LARGE SCALE GENOMIC DNA]</scope>
    <source>
        <strain>IAI39 / ExPEC</strain>
    </source>
</reference>
<dbReference type="EMBL" id="CU928164">
    <property type="protein sequence ID" value="CAR18362.1"/>
    <property type="molecule type" value="Genomic_DNA"/>
</dbReference>
<dbReference type="RefSeq" id="WP_000167336.1">
    <property type="nucleotide sequence ID" value="NC_011750.1"/>
</dbReference>
<dbReference type="RefSeq" id="YP_002408198.1">
    <property type="nucleotide sequence ID" value="NC_011750.1"/>
</dbReference>
<dbReference type="SMR" id="B7NM62"/>
<dbReference type="STRING" id="585057.ECIAI39_2235"/>
<dbReference type="GeneID" id="93776505"/>
<dbReference type="KEGG" id="ect:ECIAI39_2235"/>
<dbReference type="PATRIC" id="fig|585057.6.peg.2328"/>
<dbReference type="HOGENOM" id="CLU_105066_2_0_6"/>
<dbReference type="Proteomes" id="UP000000749">
    <property type="component" value="Chromosome"/>
</dbReference>
<dbReference type="GO" id="GO:0005694">
    <property type="term" value="C:chromosome"/>
    <property type="evidence" value="ECO:0007669"/>
    <property type="project" value="InterPro"/>
</dbReference>
<dbReference type="GO" id="GO:0005829">
    <property type="term" value="C:cytosol"/>
    <property type="evidence" value="ECO:0007669"/>
    <property type="project" value="TreeGrafter"/>
</dbReference>
<dbReference type="GO" id="GO:0003677">
    <property type="term" value="F:DNA binding"/>
    <property type="evidence" value="ECO:0007669"/>
    <property type="project" value="UniProtKB-UniRule"/>
</dbReference>
<dbReference type="GO" id="GO:0030527">
    <property type="term" value="F:structural constituent of chromatin"/>
    <property type="evidence" value="ECO:0007669"/>
    <property type="project" value="InterPro"/>
</dbReference>
<dbReference type="GO" id="GO:0006310">
    <property type="term" value="P:DNA recombination"/>
    <property type="evidence" value="ECO:0007669"/>
    <property type="project" value="UniProtKB-UniRule"/>
</dbReference>
<dbReference type="GO" id="GO:0006355">
    <property type="term" value="P:regulation of DNA-templated transcription"/>
    <property type="evidence" value="ECO:0007669"/>
    <property type="project" value="UniProtKB-UniRule"/>
</dbReference>
<dbReference type="GO" id="GO:0006417">
    <property type="term" value="P:regulation of translation"/>
    <property type="evidence" value="ECO:0007669"/>
    <property type="project" value="UniProtKB-UniRule"/>
</dbReference>
<dbReference type="CDD" id="cd13836">
    <property type="entry name" value="IHF_B"/>
    <property type="match status" value="1"/>
</dbReference>
<dbReference type="FunFam" id="4.10.520.10:FF:000003">
    <property type="entry name" value="Integration host factor subunit beta"/>
    <property type="match status" value="1"/>
</dbReference>
<dbReference type="Gene3D" id="4.10.520.10">
    <property type="entry name" value="IHF-like DNA-binding proteins"/>
    <property type="match status" value="1"/>
</dbReference>
<dbReference type="HAMAP" id="MF_00381">
    <property type="entry name" value="IHF_beta"/>
    <property type="match status" value="1"/>
</dbReference>
<dbReference type="InterPro" id="IPR000119">
    <property type="entry name" value="Hist_DNA-bd"/>
</dbReference>
<dbReference type="InterPro" id="IPR020816">
    <property type="entry name" value="Histone-like_DNA-bd_CS"/>
</dbReference>
<dbReference type="InterPro" id="IPR010992">
    <property type="entry name" value="IHF-like_DNA-bd_dom_sf"/>
</dbReference>
<dbReference type="InterPro" id="IPR005685">
    <property type="entry name" value="IHF_beta"/>
</dbReference>
<dbReference type="NCBIfam" id="TIGR00988">
    <property type="entry name" value="hip"/>
    <property type="match status" value="1"/>
</dbReference>
<dbReference type="NCBIfam" id="NF001222">
    <property type="entry name" value="PRK00199.1"/>
    <property type="match status" value="1"/>
</dbReference>
<dbReference type="PANTHER" id="PTHR33175">
    <property type="entry name" value="DNA-BINDING PROTEIN HU"/>
    <property type="match status" value="1"/>
</dbReference>
<dbReference type="PANTHER" id="PTHR33175:SF5">
    <property type="entry name" value="INTEGRATION HOST FACTOR SUBUNIT BETA"/>
    <property type="match status" value="1"/>
</dbReference>
<dbReference type="Pfam" id="PF00216">
    <property type="entry name" value="Bac_DNA_binding"/>
    <property type="match status" value="1"/>
</dbReference>
<dbReference type="PRINTS" id="PR01727">
    <property type="entry name" value="DNABINDINGHU"/>
</dbReference>
<dbReference type="SMART" id="SM00411">
    <property type="entry name" value="BHL"/>
    <property type="match status" value="1"/>
</dbReference>
<dbReference type="SUPFAM" id="SSF47729">
    <property type="entry name" value="IHF-like DNA-binding proteins"/>
    <property type="match status" value="1"/>
</dbReference>
<dbReference type="PROSITE" id="PS00045">
    <property type="entry name" value="HISTONE_LIKE"/>
    <property type="match status" value="1"/>
</dbReference>
<accession>B7NM62</accession>
<comment type="function">
    <text evidence="1">This protein is one of the two subunits of integration host factor, a specific DNA-binding protein that functions in genetic recombination as well as in transcriptional and translational control.</text>
</comment>
<comment type="subunit">
    <text evidence="1">Heterodimer of an alpha and a beta chain.</text>
</comment>
<comment type="similarity">
    <text evidence="1">Belongs to the bacterial histone-like protein family.</text>
</comment>
<keyword id="KW-0233">DNA recombination</keyword>
<keyword id="KW-0238">DNA-binding</keyword>
<keyword id="KW-0804">Transcription</keyword>
<keyword id="KW-0805">Transcription regulation</keyword>
<keyword id="KW-0810">Translation regulation</keyword>
<organism>
    <name type="scientific">Escherichia coli O7:K1 (strain IAI39 / ExPEC)</name>
    <dbReference type="NCBI Taxonomy" id="585057"/>
    <lineage>
        <taxon>Bacteria</taxon>
        <taxon>Pseudomonadati</taxon>
        <taxon>Pseudomonadota</taxon>
        <taxon>Gammaproteobacteria</taxon>
        <taxon>Enterobacterales</taxon>
        <taxon>Enterobacteriaceae</taxon>
        <taxon>Escherichia</taxon>
    </lineage>
</organism>
<sequence length="94" mass="10651">MTKSELIERLATQQSHIPAKTVEDAVKEMLEHMASTLAQGERIEIRGFGSFSLHYRAPRTGRNPKTGDKVELEGKYVPHFKPGKELRDRANIYG</sequence>